<evidence type="ECO:0000250" key="1"/>
<evidence type="ECO:0000255" key="2">
    <source>
        <dbReference type="PROSITE-ProRule" id="PRU00238"/>
    </source>
</evidence>
<evidence type="ECO:0000255" key="3">
    <source>
        <dbReference type="PROSITE-ProRule" id="PRU00716"/>
    </source>
</evidence>
<evidence type="ECO:0000269" key="4">
    <source>
    </source>
</evidence>
<evidence type="ECO:0000269" key="5">
    <source>
    </source>
</evidence>
<evidence type="ECO:0000305" key="6"/>
<proteinExistence type="evidence at protein level"/>
<reference key="1">
    <citation type="journal article" date="1992" name="J. Mol. Biol.">
        <title>Amino acid sequence of yeast hemoglobin. A two-domain structure.</title>
        <authorList>
            <person name="Iwaasa H."/>
            <person name="Takagi T."/>
            <person name="Shikama K."/>
        </authorList>
    </citation>
    <scope>NUCLEOTIDE SEQUENCE [MRNA]</scope>
    <scope>PARTIAL PROTEIN SEQUENCE</scope>
    <scope>ACETYLATION AT SER-2</scope>
    <source>
        <strain>NBRC 0734 / CBS 6917 / SIFF V-342a</strain>
    </source>
</reference>
<reference key="2">
    <citation type="submission" date="2007-03" db="EMBL/GenBank/DDBJ databases">
        <authorList>
            <person name="Takagi T."/>
        </authorList>
    </citation>
    <scope>SEQUENCE REVISION TO 389-390</scope>
</reference>
<reference key="3">
    <citation type="journal article" date="1973" name="Eur. J. Biochem.">
        <title>Purification and molecular properties of yeast hemoglobin.</title>
        <authorList>
            <person name="Oshino R."/>
            <person name="Asakura T."/>
            <person name="Takio K."/>
            <person name="Oshino N."/>
            <person name="Chance B."/>
            <person name="Hagihara B."/>
        </authorList>
    </citation>
    <scope>COFACTOR</scope>
</reference>
<reference key="4">
    <citation type="journal article" date="2002" name="J. Biol. Chem.">
        <title>Yeast flavohemoglobin from Candida norvegensis. Its structural, spectral, and stability properties.</title>
        <authorList>
            <person name="Kobayashi G."/>
            <person name="Nakamura T."/>
            <person name="Ohmachi H."/>
            <person name="Matsuoka A."/>
            <person name="Ochiai T."/>
            <person name="Shikama K."/>
        </authorList>
    </citation>
    <scope>ABSORPTION SPECTROSCOPY</scope>
    <scope>CIRCULAR DICHROISM ANALYSIS</scope>
</reference>
<reference key="5">
    <citation type="journal article" date="1995" name="Int. J. Biochem. Cell Biol.">
        <title>The unique structures of protozoan myoglobin and yeast hemoglobin: an evolutionary diversity.</title>
        <authorList>
            <person name="Shikama K."/>
            <person name="Matsuoka A."/>
            <person name="Iwaasa H."/>
        </authorList>
    </citation>
    <scope>REVIEW</scope>
</reference>
<feature type="initiator methionine" description="Removed" evidence="4">
    <location>
        <position position="1"/>
    </location>
</feature>
<feature type="chain" id="PRO_0000052459" description="Flavohemoprotein">
    <location>
        <begin position="2"/>
        <end position="390"/>
    </location>
</feature>
<feature type="domain" description="Globin" evidence="2">
    <location>
        <begin position="12"/>
        <end position="149"/>
    </location>
</feature>
<feature type="domain" description="FAD-binding FR-type" evidence="3">
    <location>
        <begin position="158"/>
        <end position="263"/>
    </location>
</feature>
<feature type="region of interest" description="Reductase">
    <location>
        <begin position="157"/>
        <end position="390"/>
    </location>
</feature>
<feature type="active site" description="Charge relay system" evidence="1">
    <location>
        <position position="106"/>
    </location>
</feature>
<feature type="active site" description="Charge relay system" evidence="1">
    <location>
        <position position="148"/>
    </location>
</feature>
<feature type="binding site" description="proximal binding residue" evidence="2">
    <location>
        <position position="96"/>
    </location>
    <ligand>
        <name>heme b</name>
        <dbReference type="ChEBI" id="CHEBI:60344"/>
    </ligand>
    <ligandPart>
        <name>Fe</name>
        <dbReference type="ChEBI" id="CHEBI:18248"/>
    </ligandPart>
</feature>
<feature type="binding site" evidence="1">
    <location>
        <position position="196"/>
    </location>
    <ligand>
        <name>FAD</name>
        <dbReference type="ChEBI" id="CHEBI:57692"/>
    </ligand>
</feature>
<feature type="binding site" evidence="1">
    <location>
        <begin position="214"/>
        <end position="217"/>
    </location>
    <ligand>
        <name>FAD</name>
        <dbReference type="ChEBI" id="CHEBI:57692"/>
    </ligand>
</feature>
<feature type="binding site" evidence="1">
    <location>
        <begin position="277"/>
        <end position="282"/>
    </location>
    <ligand>
        <name>NADP(+)</name>
        <dbReference type="ChEBI" id="CHEBI:58349"/>
    </ligand>
</feature>
<feature type="binding site" evidence="1">
    <location>
        <begin position="382"/>
        <end position="385"/>
    </location>
    <ligand>
        <name>FAD</name>
        <dbReference type="ChEBI" id="CHEBI:57692"/>
    </ligand>
</feature>
<feature type="site" description="Involved in heme-bound ligand stabilization and O-O bond activation" evidence="1">
    <location>
        <position position="40"/>
    </location>
</feature>
<feature type="site" description="Influences the redox potential of the prosthetic heme and FAD groups" evidence="1">
    <location>
        <position position="95"/>
    </location>
</feature>
<feature type="site" description="Influences the redox potential of the prosthetic heme and FAD groups" evidence="1">
    <location>
        <position position="381"/>
    </location>
</feature>
<feature type="modified residue" description="N-acetylserine" evidence="4">
    <location>
        <position position="2"/>
    </location>
</feature>
<protein>
    <recommendedName>
        <fullName>Flavohemoprotein</fullName>
        <ecNumber>1.14.12.17</ecNumber>
    </recommendedName>
    <alternativeName>
        <fullName>Flavohemoglobin</fullName>
    </alternativeName>
    <alternativeName>
        <fullName>Hemoglobin-like protein</fullName>
    </alternativeName>
    <alternativeName>
        <fullName>Nitric oxide dioxygenase</fullName>
        <shortName>NO oxygenase</shortName>
        <shortName>NOD</shortName>
    </alternativeName>
</protein>
<dbReference type="EC" id="1.14.12.17"/>
<dbReference type="EMBL" id="X68849">
    <property type="protein sequence ID" value="CAA48729.2"/>
    <property type="molecule type" value="mRNA"/>
</dbReference>
<dbReference type="PIR" id="S26964">
    <property type="entry name" value="S26964"/>
</dbReference>
<dbReference type="SMR" id="Q03331"/>
<dbReference type="iPTMnet" id="Q03331"/>
<dbReference type="GO" id="GO:0005737">
    <property type="term" value="C:cytoplasm"/>
    <property type="evidence" value="ECO:0007669"/>
    <property type="project" value="UniProtKB-SubCell"/>
</dbReference>
<dbReference type="GO" id="GO:0071949">
    <property type="term" value="F:FAD binding"/>
    <property type="evidence" value="ECO:0007669"/>
    <property type="project" value="TreeGrafter"/>
</dbReference>
<dbReference type="GO" id="GO:0020037">
    <property type="term" value="F:heme binding"/>
    <property type="evidence" value="ECO:0007669"/>
    <property type="project" value="InterPro"/>
</dbReference>
<dbReference type="GO" id="GO:0046872">
    <property type="term" value="F:metal ion binding"/>
    <property type="evidence" value="ECO:0007669"/>
    <property type="project" value="UniProtKB-KW"/>
</dbReference>
<dbReference type="GO" id="GO:0008941">
    <property type="term" value="F:nitric oxide dioxygenase NAD(P)H activity"/>
    <property type="evidence" value="ECO:0007669"/>
    <property type="project" value="UniProtKB-EC"/>
</dbReference>
<dbReference type="GO" id="GO:0019825">
    <property type="term" value="F:oxygen binding"/>
    <property type="evidence" value="ECO:0007669"/>
    <property type="project" value="InterPro"/>
</dbReference>
<dbReference type="GO" id="GO:0071500">
    <property type="term" value="P:cellular response to nitrosative stress"/>
    <property type="evidence" value="ECO:0007669"/>
    <property type="project" value="TreeGrafter"/>
</dbReference>
<dbReference type="GO" id="GO:0046210">
    <property type="term" value="P:nitric oxide catabolic process"/>
    <property type="evidence" value="ECO:0007669"/>
    <property type="project" value="TreeGrafter"/>
</dbReference>
<dbReference type="GO" id="GO:0009636">
    <property type="term" value="P:response to toxic substance"/>
    <property type="evidence" value="ECO:0007669"/>
    <property type="project" value="UniProtKB-KW"/>
</dbReference>
<dbReference type="CDD" id="cd19754">
    <property type="entry name" value="FHb_fungal-globin"/>
    <property type="match status" value="1"/>
</dbReference>
<dbReference type="CDD" id="cd06184">
    <property type="entry name" value="flavohem_like_fad_nad_binding"/>
    <property type="match status" value="1"/>
</dbReference>
<dbReference type="Gene3D" id="1.10.490.10">
    <property type="entry name" value="Globins"/>
    <property type="match status" value="1"/>
</dbReference>
<dbReference type="Gene3D" id="3.40.50.80">
    <property type="entry name" value="Nucleotide-binding domain of ferredoxin-NADP reductase (FNR) module"/>
    <property type="match status" value="1"/>
</dbReference>
<dbReference type="Gene3D" id="2.40.30.10">
    <property type="entry name" value="Translation factors"/>
    <property type="match status" value="1"/>
</dbReference>
<dbReference type="InterPro" id="IPR017927">
    <property type="entry name" value="FAD-bd_FR_type"/>
</dbReference>
<dbReference type="InterPro" id="IPR013121">
    <property type="entry name" value="Fe_red_NAD-bd_6"/>
</dbReference>
<dbReference type="InterPro" id="IPR039261">
    <property type="entry name" value="FNR_nucleotide-bd"/>
</dbReference>
<dbReference type="InterPro" id="IPR000971">
    <property type="entry name" value="Globin"/>
</dbReference>
<dbReference type="InterPro" id="IPR009050">
    <property type="entry name" value="Globin-like_sf"/>
</dbReference>
<dbReference type="InterPro" id="IPR012292">
    <property type="entry name" value="Globin/Proto"/>
</dbReference>
<dbReference type="InterPro" id="IPR017938">
    <property type="entry name" value="Riboflavin_synthase-like_b-brl"/>
</dbReference>
<dbReference type="PANTHER" id="PTHR43396">
    <property type="entry name" value="FLAVOHEMOPROTEIN"/>
    <property type="match status" value="1"/>
</dbReference>
<dbReference type="PANTHER" id="PTHR43396:SF3">
    <property type="entry name" value="FLAVOHEMOPROTEIN"/>
    <property type="match status" value="1"/>
</dbReference>
<dbReference type="Pfam" id="PF00042">
    <property type="entry name" value="Globin"/>
    <property type="match status" value="1"/>
</dbReference>
<dbReference type="Pfam" id="PF08030">
    <property type="entry name" value="NAD_binding_6"/>
    <property type="match status" value="1"/>
</dbReference>
<dbReference type="PRINTS" id="PR00409">
    <property type="entry name" value="PHDIOXRDTASE"/>
</dbReference>
<dbReference type="SUPFAM" id="SSF52343">
    <property type="entry name" value="Ferredoxin reductase-like, C-terminal NADP-linked domain"/>
    <property type="match status" value="1"/>
</dbReference>
<dbReference type="SUPFAM" id="SSF46458">
    <property type="entry name" value="Globin-like"/>
    <property type="match status" value="1"/>
</dbReference>
<dbReference type="SUPFAM" id="SSF63380">
    <property type="entry name" value="Riboflavin synthase domain-like"/>
    <property type="match status" value="1"/>
</dbReference>
<dbReference type="PROSITE" id="PS51384">
    <property type="entry name" value="FAD_FR"/>
    <property type="match status" value="1"/>
</dbReference>
<dbReference type="PROSITE" id="PS01033">
    <property type="entry name" value="GLOBIN"/>
    <property type="match status" value="1"/>
</dbReference>
<keyword id="KW-0007">Acetylation</keyword>
<keyword id="KW-0963">Cytoplasm</keyword>
<keyword id="KW-0216">Detoxification</keyword>
<keyword id="KW-0903">Direct protein sequencing</keyword>
<keyword id="KW-0274">FAD</keyword>
<keyword id="KW-0285">Flavoprotein</keyword>
<keyword id="KW-0349">Heme</keyword>
<keyword id="KW-0408">Iron</keyword>
<keyword id="KW-0479">Metal-binding</keyword>
<keyword id="KW-0520">NAD</keyword>
<keyword id="KW-0521">NADP</keyword>
<keyword id="KW-0560">Oxidoreductase</keyword>
<sequence length="390" mass="44363">MSAAKQLFKIVPLTPTEINFLQSLAPVVKEHGVTVTSTMYKYMFQTYPEVRSYFNMTNQKTGRQPKVLAFSLYQYILHLNDLTPISGFVNQIVLKHCGLGIKPDQYPVVGESLVQAFKMVLGEAADEHFVEVFKKAYGNLAQTLIDAEASVYKTLAWEEFKDFRVTKLVKEAEDVTSVYLTPVDGFKLKPIIPGEYISFRWDIHNPDITDIQPREYSISQDVKENEYRISVRDIGIVSDYINKKLQVGDIVPVHAPVGTMKYDSISKKGKVAVLAGGIGITPMIPIIEHALKDGKDVELYYSNRSYQSEPFREFFSNLEKENNGKFKLNNYISAENQKLQVKDLEHINPDEYDVYLLGPVAYMHEFKTYLVGKGVSDLKMEFFGPTDPDC</sequence>
<name>FHP_CANNO</name>
<comment type="function">
    <text evidence="1">Is involved in NO detoxification in an aerobic process, termed nitric oxide dioxygenase (NOD) reaction that utilizes O(2) and NAD(P)H to convert NO to nitrate, which protects the fungus from various noxious nitrogen compounds. Therefore, plays a central role in the inducible response to nitrosative stress (By similarity).</text>
</comment>
<comment type="function">
    <text evidence="1">In the presence of oxygen and NADH, it has NADH oxidase activity, which leads to the generation of superoxide and H(2)O(2). Under anaerobic conditions, it also exhibits nitric oxide reductase and FAD reductase activities. However, all these reactions are much lower than NOD activity (By similarity).</text>
</comment>
<comment type="catalytic activity">
    <reaction>
        <text>2 nitric oxide + NADPH + 2 O2 = 2 nitrate + NADP(+) + H(+)</text>
        <dbReference type="Rhea" id="RHEA:19465"/>
        <dbReference type="ChEBI" id="CHEBI:15378"/>
        <dbReference type="ChEBI" id="CHEBI:15379"/>
        <dbReference type="ChEBI" id="CHEBI:16480"/>
        <dbReference type="ChEBI" id="CHEBI:17632"/>
        <dbReference type="ChEBI" id="CHEBI:57783"/>
        <dbReference type="ChEBI" id="CHEBI:58349"/>
        <dbReference type="EC" id="1.14.12.17"/>
    </reaction>
</comment>
<comment type="catalytic activity">
    <reaction>
        <text>2 nitric oxide + NADH + 2 O2 = 2 nitrate + NAD(+) + H(+)</text>
        <dbReference type="Rhea" id="RHEA:19469"/>
        <dbReference type="ChEBI" id="CHEBI:15378"/>
        <dbReference type="ChEBI" id="CHEBI:15379"/>
        <dbReference type="ChEBI" id="CHEBI:16480"/>
        <dbReference type="ChEBI" id="CHEBI:17632"/>
        <dbReference type="ChEBI" id="CHEBI:57540"/>
        <dbReference type="ChEBI" id="CHEBI:57945"/>
        <dbReference type="EC" id="1.14.12.17"/>
    </reaction>
</comment>
<comment type="cofactor">
    <cofactor evidence="5">
        <name>FAD</name>
        <dbReference type="ChEBI" id="CHEBI:57692"/>
    </cofactor>
    <text evidence="5">Binds 1 FAD per subunit.</text>
</comment>
<comment type="cofactor">
    <cofactor evidence="5">
        <name>heme b</name>
        <dbReference type="ChEBI" id="CHEBI:60344"/>
    </cofactor>
    <text evidence="5">Binds 1 heme b group per subunit.</text>
</comment>
<comment type="subcellular location">
    <subcellularLocation>
        <location evidence="1">Cytoplasm</location>
    </subcellularLocation>
</comment>
<comment type="domain">
    <text>Consists of two distinct domains; a N-terminal heme-containing oxygen-binding domain and a C-terminal reductase domain with binding sites for FAD and NAD(P)H.</text>
</comment>
<comment type="similarity">
    <text evidence="2">Belongs to the globin family. Two-domain flavohemoproteins subfamily.</text>
</comment>
<comment type="similarity">
    <text evidence="6">In the C-terminal section; belongs to the flavoprotein pyridine nucleotide cytochrome reductase family.</text>
</comment>
<accession>Q03331</accession>
<organism>
    <name type="scientific">Candida norvegensis</name>
    <name type="common">Yeast</name>
    <name type="synonym">Candida mycoderma</name>
    <dbReference type="NCBI Taxonomy" id="4921"/>
    <lineage>
        <taxon>Eukaryota</taxon>
        <taxon>Fungi</taxon>
        <taxon>Dikarya</taxon>
        <taxon>Ascomycota</taxon>
        <taxon>Saccharomycotina</taxon>
        <taxon>Pichiomycetes</taxon>
        <taxon>Pichiales</taxon>
        <taxon>Pichiaceae</taxon>
        <taxon>Pichia</taxon>
    </lineage>
</organism>